<reference key="1">
    <citation type="journal article" date="2004" name="Environ. Microbiol.">
        <title>The genome of Desulfotalea psychrophila, a sulfate-reducing bacterium from permanently cold Arctic sediments.</title>
        <authorList>
            <person name="Rabus R."/>
            <person name="Ruepp A."/>
            <person name="Frickey T."/>
            <person name="Rattei T."/>
            <person name="Fartmann B."/>
            <person name="Stark M."/>
            <person name="Bauer M."/>
            <person name="Zibat A."/>
            <person name="Lombardot T."/>
            <person name="Becker I."/>
            <person name="Amann J."/>
            <person name="Gellner K."/>
            <person name="Teeling H."/>
            <person name="Leuschner W.D."/>
            <person name="Gloeckner F.-O."/>
            <person name="Lupas A.N."/>
            <person name="Amann R."/>
            <person name="Klenk H.-P."/>
        </authorList>
    </citation>
    <scope>NUCLEOTIDE SEQUENCE [LARGE SCALE GENOMIC DNA]</scope>
    <source>
        <strain>DSM 12343 / LSv54</strain>
    </source>
</reference>
<evidence type="ECO:0000255" key="1">
    <source>
        <dbReference type="HAMAP-Rule" id="MF_00185"/>
    </source>
</evidence>
<organism>
    <name type="scientific">Desulfotalea psychrophila (strain LSv54 / DSM 12343)</name>
    <dbReference type="NCBI Taxonomy" id="177439"/>
    <lineage>
        <taxon>Bacteria</taxon>
        <taxon>Pseudomonadati</taxon>
        <taxon>Thermodesulfobacteriota</taxon>
        <taxon>Desulfobulbia</taxon>
        <taxon>Desulfobulbales</taxon>
        <taxon>Desulfocapsaceae</taxon>
        <taxon>Desulfotalea</taxon>
    </lineage>
</organism>
<dbReference type="EC" id="2.5.1.75" evidence="1"/>
<dbReference type="EMBL" id="CR522870">
    <property type="protein sequence ID" value="CAG36659.1"/>
    <property type="molecule type" value="Genomic_DNA"/>
</dbReference>
<dbReference type="RefSeq" id="WP_011189171.1">
    <property type="nucleotide sequence ID" value="NC_006138.1"/>
</dbReference>
<dbReference type="SMR" id="Q6ALW6"/>
<dbReference type="STRING" id="177439.DP1930"/>
<dbReference type="KEGG" id="dps:DP1930"/>
<dbReference type="eggNOG" id="COG0324">
    <property type="taxonomic scope" value="Bacteria"/>
</dbReference>
<dbReference type="HOGENOM" id="CLU_032616_0_1_7"/>
<dbReference type="OrthoDB" id="9776390at2"/>
<dbReference type="Proteomes" id="UP000000602">
    <property type="component" value="Chromosome"/>
</dbReference>
<dbReference type="GO" id="GO:0005524">
    <property type="term" value="F:ATP binding"/>
    <property type="evidence" value="ECO:0007669"/>
    <property type="project" value="UniProtKB-UniRule"/>
</dbReference>
<dbReference type="GO" id="GO:0052381">
    <property type="term" value="F:tRNA dimethylallyltransferase activity"/>
    <property type="evidence" value="ECO:0007669"/>
    <property type="project" value="UniProtKB-UniRule"/>
</dbReference>
<dbReference type="GO" id="GO:0006400">
    <property type="term" value="P:tRNA modification"/>
    <property type="evidence" value="ECO:0007669"/>
    <property type="project" value="TreeGrafter"/>
</dbReference>
<dbReference type="FunFam" id="1.10.20.140:FF:000001">
    <property type="entry name" value="tRNA dimethylallyltransferase"/>
    <property type="match status" value="1"/>
</dbReference>
<dbReference type="Gene3D" id="1.10.20.140">
    <property type="match status" value="1"/>
</dbReference>
<dbReference type="Gene3D" id="3.40.50.300">
    <property type="entry name" value="P-loop containing nucleotide triphosphate hydrolases"/>
    <property type="match status" value="1"/>
</dbReference>
<dbReference type="HAMAP" id="MF_00185">
    <property type="entry name" value="IPP_trans"/>
    <property type="match status" value="1"/>
</dbReference>
<dbReference type="InterPro" id="IPR039657">
    <property type="entry name" value="Dimethylallyltransferase"/>
</dbReference>
<dbReference type="InterPro" id="IPR018022">
    <property type="entry name" value="IPT"/>
</dbReference>
<dbReference type="InterPro" id="IPR027417">
    <property type="entry name" value="P-loop_NTPase"/>
</dbReference>
<dbReference type="NCBIfam" id="TIGR00174">
    <property type="entry name" value="miaA"/>
    <property type="match status" value="1"/>
</dbReference>
<dbReference type="PANTHER" id="PTHR11088">
    <property type="entry name" value="TRNA DIMETHYLALLYLTRANSFERASE"/>
    <property type="match status" value="1"/>
</dbReference>
<dbReference type="PANTHER" id="PTHR11088:SF60">
    <property type="entry name" value="TRNA DIMETHYLALLYLTRANSFERASE"/>
    <property type="match status" value="1"/>
</dbReference>
<dbReference type="Pfam" id="PF01715">
    <property type="entry name" value="IPPT"/>
    <property type="match status" value="1"/>
</dbReference>
<dbReference type="SUPFAM" id="SSF52540">
    <property type="entry name" value="P-loop containing nucleoside triphosphate hydrolases"/>
    <property type="match status" value="2"/>
</dbReference>
<sequence>MEKIKQPVLVLVGPTAIGKTALSLQLARQFSCEVVSMDSMQVYRHMDIGTAKISKEEQGEVPHHLLDIVEPDEHYDASMYCRDALRTITEIHARGHIPLVTGGTGLYLQSLTKGFFEGPPSDSAVRERLQEELDNLGPEEMHARLEQLDPLSAQRLHPNDSYRVMRALEIFAITGKPWSQLLSQHKPENQFANMLQIGLTCDRPLLYDRINMRTQIMLDAGLEEEVRGLLDMGYSRELRSMGSIGYKHMANFIFGDWEFEEMKTLLARDTRRYAKRQYTWFNKDEDLHWYQKESKAEIVDRVGQWLEDQLSKNL</sequence>
<gene>
    <name evidence="1" type="primary">miaA</name>
    <name type="ordered locus">DP1930</name>
</gene>
<name>MIAA_DESPS</name>
<accession>Q6ALW6</accession>
<feature type="chain" id="PRO_0000163911" description="tRNA dimethylallyltransferase">
    <location>
        <begin position="1"/>
        <end position="314"/>
    </location>
</feature>
<feature type="region of interest" description="Interaction with substrate tRNA" evidence="1">
    <location>
        <begin position="38"/>
        <end position="41"/>
    </location>
</feature>
<feature type="binding site" evidence="1">
    <location>
        <begin position="13"/>
        <end position="20"/>
    </location>
    <ligand>
        <name>ATP</name>
        <dbReference type="ChEBI" id="CHEBI:30616"/>
    </ligand>
</feature>
<feature type="binding site" evidence="1">
    <location>
        <begin position="15"/>
        <end position="20"/>
    </location>
    <ligand>
        <name>substrate</name>
    </ligand>
</feature>
<feature type="site" description="Interaction with substrate tRNA" evidence="1">
    <location>
        <position position="104"/>
    </location>
</feature>
<feature type="site" description="Interaction with substrate tRNA" evidence="1">
    <location>
        <position position="126"/>
    </location>
</feature>
<protein>
    <recommendedName>
        <fullName evidence="1">tRNA dimethylallyltransferase</fullName>
        <ecNumber evidence="1">2.5.1.75</ecNumber>
    </recommendedName>
    <alternativeName>
        <fullName evidence="1">Dimethylallyl diphosphate:tRNA dimethylallyltransferase</fullName>
        <shortName evidence="1">DMAPP:tRNA dimethylallyltransferase</shortName>
        <shortName evidence="1">DMATase</shortName>
    </alternativeName>
    <alternativeName>
        <fullName evidence="1">Isopentenyl-diphosphate:tRNA isopentenyltransferase</fullName>
        <shortName evidence="1">IPP transferase</shortName>
        <shortName evidence="1">IPPT</shortName>
        <shortName evidence="1">IPTase</shortName>
    </alternativeName>
</protein>
<comment type="function">
    <text evidence="1">Catalyzes the transfer of a dimethylallyl group onto the adenine at position 37 in tRNAs that read codons beginning with uridine, leading to the formation of N6-(dimethylallyl)adenosine (i(6)A).</text>
</comment>
<comment type="catalytic activity">
    <reaction evidence="1">
        <text>adenosine(37) in tRNA + dimethylallyl diphosphate = N(6)-dimethylallyladenosine(37) in tRNA + diphosphate</text>
        <dbReference type="Rhea" id="RHEA:26482"/>
        <dbReference type="Rhea" id="RHEA-COMP:10162"/>
        <dbReference type="Rhea" id="RHEA-COMP:10375"/>
        <dbReference type="ChEBI" id="CHEBI:33019"/>
        <dbReference type="ChEBI" id="CHEBI:57623"/>
        <dbReference type="ChEBI" id="CHEBI:74411"/>
        <dbReference type="ChEBI" id="CHEBI:74415"/>
        <dbReference type="EC" id="2.5.1.75"/>
    </reaction>
</comment>
<comment type="cofactor">
    <cofactor evidence="1">
        <name>Mg(2+)</name>
        <dbReference type="ChEBI" id="CHEBI:18420"/>
    </cofactor>
</comment>
<comment type="subunit">
    <text evidence="1">Monomer.</text>
</comment>
<comment type="similarity">
    <text evidence="1">Belongs to the IPP transferase family.</text>
</comment>
<keyword id="KW-0067">ATP-binding</keyword>
<keyword id="KW-0460">Magnesium</keyword>
<keyword id="KW-0547">Nucleotide-binding</keyword>
<keyword id="KW-1185">Reference proteome</keyword>
<keyword id="KW-0808">Transferase</keyword>
<keyword id="KW-0819">tRNA processing</keyword>
<proteinExistence type="inferred from homology"/>